<protein>
    <recommendedName>
        <fullName evidence="1">ATP-dependent protease ATPase subunit HslU</fullName>
    </recommendedName>
    <alternativeName>
        <fullName evidence="1">Unfoldase HslU</fullName>
    </alternativeName>
</protein>
<gene>
    <name evidence="1" type="primary">hslU</name>
    <name type="ordered locus">Spro_4793</name>
</gene>
<dbReference type="EMBL" id="CP000826">
    <property type="protein sequence ID" value="ABV43886.1"/>
    <property type="molecule type" value="Genomic_DNA"/>
</dbReference>
<dbReference type="SMR" id="A8GL96"/>
<dbReference type="STRING" id="399741.Spro_4793"/>
<dbReference type="KEGG" id="spe:Spro_4793"/>
<dbReference type="eggNOG" id="COG1220">
    <property type="taxonomic scope" value="Bacteria"/>
</dbReference>
<dbReference type="HOGENOM" id="CLU_033123_0_0_6"/>
<dbReference type="OrthoDB" id="9804062at2"/>
<dbReference type="GO" id="GO:0009376">
    <property type="term" value="C:HslUV protease complex"/>
    <property type="evidence" value="ECO:0007669"/>
    <property type="project" value="UniProtKB-UniRule"/>
</dbReference>
<dbReference type="GO" id="GO:0005524">
    <property type="term" value="F:ATP binding"/>
    <property type="evidence" value="ECO:0007669"/>
    <property type="project" value="UniProtKB-UniRule"/>
</dbReference>
<dbReference type="GO" id="GO:0016887">
    <property type="term" value="F:ATP hydrolysis activity"/>
    <property type="evidence" value="ECO:0007669"/>
    <property type="project" value="InterPro"/>
</dbReference>
<dbReference type="GO" id="GO:0008233">
    <property type="term" value="F:peptidase activity"/>
    <property type="evidence" value="ECO:0007669"/>
    <property type="project" value="InterPro"/>
</dbReference>
<dbReference type="GO" id="GO:0036402">
    <property type="term" value="F:proteasome-activating activity"/>
    <property type="evidence" value="ECO:0007669"/>
    <property type="project" value="UniProtKB-UniRule"/>
</dbReference>
<dbReference type="GO" id="GO:0043335">
    <property type="term" value="P:protein unfolding"/>
    <property type="evidence" value="ECO:0007669"/>
    <property type="project" value="UniProtKB-UniRule"/>
</dbReference>
<dbReference type="GO" id="GO:0051603">
    <property type="term" value="P:proteolysis involved in protein catabolic process"/>
    <property type="evidence" value="ECO:0007669"/>
    <property type="project" value="TreeGrafter"/>
</dbReference>
<dbReference type="CDD" id="cd19498">
    <property type="entry name" value="RecA-like_HslU"/>
    <property type="match status" value="1"/>
</dbReference>
<dbReference type="FunFam" id="1.10.8.10:FF:000028">
    <property type="entry name" value="ATP-dependent protease ATPase subunit HslU"/>
    <property type="match status" value="2"/>
</dbReference>
<dbReference type="FunFam" id="1.10.8.60:FF:000027">
    <property type="entry name" value="ATP-dependent protease ATPase subunit HslU"/>
    <property type="match status" value="1"/>
</dbReference>
<dbReference type="FunFam" id="3.40.50.300:FF:000213">
    <property type="entry name" value="ATP-dependent protease ATPase subunit HslU"/>
    <property type="match status" value="1"/>
</dbReference>
<dbReference type="FunFam" id="3.40.50.300:FF:000220">
    <property type="entry name" value="ATP-dependent protease ATPase subunit HslU"/>
    <property type="match status" value="1"/>
</dbReference>
<dbReference type="Gene3D" id="1.10.8.60">
    <property type="match status" value="1"/>
</dbReference>
<dbReference type="Gene3D" id="1.10.8.10">
    <property type="entry name" value="DNA helicase RuvA subunit, C-terminal domain"/>
    <property type="match status" value="1"/>
</dbReference>
<dbReference type="Gene3D" id="3.40.50.300">
    <property type="entry name" value="P-loop containing nucleotide triphosphate hydrolases"/>
    <property type="match status" value="2"/>
</dbReference>
<dbReference type="HAMAP" id="MF_00249">
    <property type="entry name" value="HslU"/>
    <property type="match status" value="1"/>
</dbReference>
<dbReference type="InterPro" id="IPR003593">
    <property type="entry name" value="AAA+_ATPase"/>
</dbReference>
<dbReference type="InterPro" id="IPR050052">
    <property type="entry name" value="ATP-dep_Clp_protease_ClpX"/>
</dbReference>
<dbReference type="InterPro" id="IPR003959">
    <property type="entry name" value="ATPase_AAA_core"/>
</dbReference>
<dbReference type="InterPro" id="IPR019489">
    <property type="entry name" value="Clp_ATPase_C"/>
</dbReference>
<dbReference type="InterPro" id="IPR004491">
    <property type="entry name" value="HslU"/>
</dbReference>
<dbReference type="InterPro" id="IPR027417">
    <property type="entry name" value="P-loop_NTPase"/>
</dbReference>
<dbReference type="NCBIfam" id="TIGR00390">
    <property type="entry name" value="hslU"/>
    <property type="match status" value="1"/>
</dbReference>
<dbReference type="NCBIfam" id="NF003544">
    <property type="entry name" value="PRK05201.1"/>
    <property type="match status" value="1"/>
</dbReference>
<dbReference type="PANTHER" id="PTHR48102">
    <property type="entry name" value="ATP-DEPENDENT CLP PROTEASE ATP-BINDING SUBUNIT CLPX-LIKE, MITOCHONDRIAL-RELATED"/>
    <property type="match status" value="1"/>
</dbReference>
<dbReference type="PANTHER" id="PTHR48102:SF3">
    <property type="entry name" value="ATP-DEPENDENT PROTEASE ATPASE SUBUNIT HSLU"/>
    <property type="match status" value="1"/>
</dbReference>
<dbReference type="Pfam" id="PF00004">
    <property type="entry name" value="AAA"/>
    <property type="match status" value="1"/>
</dbReference>
<dbReference type="Pfam" id="PF07724">
    <property type="entry name" value="AAA_2"/>
    <property type="match status" value="1"/>
</dbReference>
<dbReference type="SMART" id="SM00382">
    <property type="entry name" value="AAA"/>
    <property type="match status" value="1"/>
</dbReference>
<dbReference type="SMART" id="SM01086">
    <property type="entry name" value="ClpB_D2-small"/>
    <property type="match status" value="1"/>
</dbReference>
<dbReference type="SUPFAM" id="SSF52540">
    <property type="entry name" value="P-loop containing nucleoside triphosphate hydrolases"/>
    <property type="match status" value="1"/>
</dbReference>
<feature type="chain" id="PRO_1000059027" description="ATP-dependent protease ATPase subunit HslU">
    <location>
        <begin position="1"/>
        <end position="444"/>
    </location>
</feature>
<feature type="binding site" evidence="1">
    <location>
        <position position="18"/>
    </location>
    <ligand>
        <name>ATP</name>
        <dbReference type="ChEBI" id="CHEBI:30616"/>
    </ligand>
</feature>
<feature type="binding site" evidence="1">
    <location>
        <begin position="60"/>
        <end position="65"/>
    </location>
    <ligand>
        <name>ATP</name>
        <dbReference type="ChEBI" id="CHEBI:30616"/>
    </ligand>
</feature>
<feature type="binding site" evidence="1">
    <location>
        <position position="256"/>
    </location>
    <ligand>
        <name>ATP</name>
        <dbReference type="ChEBI" id="CHEBI:30616"/>
    </ligand>
</feature>
<feature type="binding site" evidence="1">
    <location>
        <position position="322"/>
    </location>
    <ligand>
        <name>ATP</name>
        <dbReference type="ChEBI" id="CHEBI:30616"/>
    </ligand>
</feature>
<feature type="binding site" evidence="1">
    <location>
        <position position="394"/>
    </location>
    <ligand>
        <name>ATP</name>
        <dbReference type="ChEBI" id="CHEBI:30616"/>
    </ligand>
</feature>
<comment type="function">
    <text evidence="1">ATPase subunit of a proteasome-like degradation complex; this subunit has chaperone activity. The binding of ATP and its subsequent hydrolysis by HslU are essential for unfolding of protein substrates subsequently hydrolyzed by HslV. HslU recognizes the N-terminal part of its protein substrates and unfolds these before they are guided to HslV for hydrolysis.</text>
</comment>
<comment type="subunit">
    <text evidence="1">A double ring-shaped homohexamer of HslV is capped on each side by a ring-shaped HslU homohexamer. The assembly of the HslU/HslV complex is dependent on binding of ATP.</text>
</comment>
<comment type="subcellular location">
    <subcellularLocation>
        <location evidence="1">Cytoplasm</location>
    </subcellularLocation>
</comment>
<comment type="similarity">
    <text evidence="1">Belongs to the ClpX chaperone family. HslU subfamily.</text>
</comment>
<name>HSLU_SERP5</name>
<proteinExistence type="inferred from homology"/>
<sequence>MSEMTPREIVSELDSYIIGQNKAKRAVAIALRNRWRRMQLNEMLRHEVTPKNILMIGPTGVGKTEIARRLAKLANAPFIKVEATKFTEVGYVGKEVDSIIRDLTDAAIKMVRLQSIDKNRTRAEELAEERILDVLIPPAKNNWGQAEEHQEPSSARQAFRKKLREGQLDDKEIEIDLAAAPMGVEIMAPPGMEEMTNQLQSMFQNLGGQKQKPRKLKIKEAFKLLVEEEAAKLVNPEELKEQAIEAVEQHGIVFIDEIDKICKRGGQSSGPDVSREGVQRDLLPLVEGCTVSTKHGMVKTDHILFIASGAFQTASPSDLIPELQGRLPIRVELQALTTEDFERILTEPSASLTEQYKALMGTEGVNIEFTAEGIRRIAEAAWQVNESTENIGARRLHTVLERLMEDISYDASEINGQSITIDADYVRNHLDELVADEDLSRFIL</sequence>
<accession>A8GL96</accession>
<evidence type="ECO:0000255" key="1">
    <source>
        <dbReference type="HAMAP-Rule" id="MF_00249"/>
    </source>
</evidence>
<reference key="1">
    <citation type="submission" date="2007-09" db="EMBL/GenBank/DDBJ databases">
        <title>Complete sequence of chromosome of Serratia proteamaculans 568.</title>
        <authorList>
            <consortium name="US DOE Joint Genome Institute"/>
            <person name="Copeland A."/>
            <person name="Lucas S."/>
            <person name="Lapidus A."/>
            <person name="Barry K."/>
            <person name="Glavina del Rio T."/>
            <person name="Dalin E."/>
            <person name="Tice H."/>
            <person name="Pitluck S."/>
            <person name="Chain P."/>
            <person name="Malfatti S."/>
            <person name="Shin M."/>
            <person name="Vergez L."/>
            <person name="Schmutz J."/>
            <person name="Larimer F."/>
            <person name="Land M."/>
            <person name="Hauser L."/>
            <person name="Kyrpides N."/>
            <person name="Kim E."/>
            <person name="Taghavi S."/>
            <person name="Newman L."/>
            <person name="Vangronsveld J."/>
            <person name="van der Lelie D."/>
            <person name="Richardson P."/>
        </authorList>
    </citation>
    <scope>NUCLEOTIDE SEQUENCE [LARGE SCALE GENOMIC DNA]</scope>
    <source>
        <strain>568</strain>
    </source>
</reference>
<keyword id="KW-0067">ATP-binding</keyword>
<keyword id="KW-0143">Chaperone</keyword>
<keyword id="KW-0963">Cytoplasm</keyword>
<keyword id="KW-0547">Nucleotide-binding</keyword>
<keyword id="KW-0346">Stress response</keyword>
<organism>
    <name type="scientific">Serratia proteamaculans (strain 568)</name>
    <dbReference type="NCBI Taxonomy" id="399741"/>
    <lineage>
        <taxon>Bacteria</taxon>
        <taxon>Pseudomonadati</taxon>
        <taxon>Pseudomonadota</taxon>
        <taxon>Gammaproteobacteria</taxon>
        <taxon>Enterobacterales</taxon>
        <taxon>Yersiniaceae</taxon>
        <taxon>Serratia</taxon>
    </lineage>
</organism>